<name>PNP_BURP6</name>
<organism>
    <name type="scientific">Burkholderia pseudomallei (strain 668)</name>
    <dbReference type="NCBI Taxonomy" id="320373"/>
    <lineage>
        <taxon>Bacteria</taxon>
        <taxon>Pseudomonadati</taxon>
        <taxon>Pseudomonadota</taxon>
        <taxon>Betaproteobacteria</taxon>
        <taxon>Burkholderiales</taxon>
        <taxon>Burkholderiaceae</taxon>
        <taxon>Burkholderia</taxon>
        <taxon>pseudomallei group</taxon>
    </lineage>
</organism>
<dbReference type="EC" id="2.7.7.8" evidence="1"/>
<dbReference type="EMBL" id="CP000570">
    <property type="protein sequence ID" value="ABN82035.1"/>
    <property type="molecule type" value="Genomic_DNA"/>
</dbReference>
<dbReference type="RefSeq" id="WP_004526459.1">
    <property type="nucleotide sequence ID" value="NC_009074.1"/>
</dbReference>
<dbReference type="SMR" id="A3N7L3"/>
<dbReference type="GeneID" id="93059689"/>
<dbReference type="KEGG" id="bpd:BURPS668_1285"/>
<dbReference type="HOGENOM" id="CLU_004217_2_2_4"/>
<dbReference type="GO" id="GO:0005829">
    <property type="term" value="C:cytosol"/>
    <property type="evidence" value="ECO:0007669"/>
    <property type="project" value="TreeGrafter"/>
</dbReference>
<dbReference type="GO" id="GO:0000175">
    <property type="term" value="F:3'-5'-RNA exonuclease activity"/>
    <property type="evidence" value="ECO:0007669"/>
    <property type="project" value="TreeGrafter"/>
</dbReference>
<dbReference type="GO" id="GO:0000287">
    <property type="term" value="F:magnesium ion binding"/>
    <property type="evidence" value="ECO:0007669"/>
    <property type="project" value="UniProtKB-UniRule"/>
</dbReference>
<dbReference type="GO" id="GO:0004654">
    <property type="term" value="F:polyribonucleotide nucleotidyltransferase activity"/>
    <property type="evidence" value="ECO:0007669"/>
    <property type="project" value="UniProtKB-UniRule"/>
</dbReference>
<dbReference type="GO" id="GO:0003723">
    <property type="term" value="F:RNA binding"/>
    <property type="evidence" value="ECO:0007669"/>
    <property type="project" value="UniProtKB-UniRule"/>
</dbReference>
<dbReference type="GO" id="GO:0006402">
    <property type="term" value="P:mRNA catabolic process"/>
    <property type="evidence" value="ECO:0007669"/>
    <property type="project" value="UniProtKB-UniRule"/>
</dbReference>
<dbReference type="GO" id="GO:0006396">
    <property type="term" value="P:RNA processing"/>
    <property type="evidence" value="ECO:0007669"/>
    <property type="project" value="InterPro"/>
</dbReference>
<dbReference type="CDD" id="cd02393">
    <property type="entry name" value="KH-I_PNPase"/>
    <property type="match status" value="1"/>
</dbReference>
<dbReference type="CDD" id="cd11363">
    <property type="entry name" value="RNase_PH_PNPase_1"/>
    <property type="match status" value="1"/>
</dbReference>
<dbReference type="CDD" id="cd11364">
    <property type="entry name" value="RNase_PH_PNPase_2"/>
    <property type="match status" value="1"/>
</dbReference>
<dbReference type="CDD" id="cd04472">
    <property type="entry name" value="S1_PNPase"/>
    <property type="match status" value="1"/>
</dbReference>
<dbReference type="FunFam" id="3.30.1370.10:FF:000001">
    <property type="entry name" value="Polyribonucleotide nucleotidyltransferase"/>
    <property type="match status" value="1"/>
</dbReference>
<dbReference type="FunFam" id="3.30.230.70:FF:000001">
    <property type="entry name" value="Polyribonucleotide nucleotidyltransferase"/>
    <property type="match status" value="1"/>
</dbReference>
<dbReference type="FunFam" id="3.30.230.70:FF:000002">
    <property type="entry name" value="Polyribonucleotide nucleotidyltransferase"/>
    <property type="match status" value="1"/>
</dbReference>
<dbReference type="FunFam" id="2.40.50.140:FF:000189">
    <property type="entry name" value="Polyribonucleotide nucleotidyltransferase, putative"/>
    <property type="match status" value="1"/>
</dbReference>
<dbReference type="Gene3D" id="3.30.230.70">
    <property type="entry name" value="GHMP Kinase, N-terminal domain"/>
    <property type="match status" value="2"/>
</dbReference>
<dbReference type="Gene3D" id="3.30.1370.10">
    <property type="entry name" value="K Homology domain, type 1"/>
    <property type="match status" value="1"/>
</dbReference>
<dbReference type="Gene3D" id="2.40.50.140">
    <property type="entry name" value="Nucleic acid-binding proteins"/>
    <property type="match status" value="1"/>
</dbReference>
<dbReference type="HAMAP" id="MF_01595">
    <property type="entry name" value="PNPase"/>
    <property type="match status" value="1"/>
</dbReference>
<dbReference type="InterPro" id="IPR001247">
    <property type="entry name" value="ExoRNase_PH_dom1"/>
</dbReference>
<dbReference type="InterPro" id="IPR015847">
    <property type="entry name" value="ExoRNase_PH_dom2"/>
</dbReference>
<dbReference type="InterPro" id="IPR036345">
    <property type="entry name" value="ExoRNase_PH_dom2_sf"/>
</dbReference>
<dbReference type="InterPro" id="IPR004087">
    <property type="entry name" value="KH_dom"/>
</dbReference>
<dbReference type="InterPro" id="IPR004088">
    <property type="entry name" value="KH_dom_type_1"/>
</dbReference>
<dbReference type="InterPro" id="IPR036612">
    <property type="entry name" value="KH_dom_type_1_sf"/>
</dbReference>
<dbReference type="InterPro" id="IPR012340">
    <property type="entry name" value="NA-bd_OB-fold"/>
</dbReference>
<dbReference type="InterPro" id="IPR012162">
    <property type="entry name" value="PNPase"/>
</dbReference>
<dbReference type="InterPro" id="IPR027408">
    <property type="entry name" value="PNPase/RNase_PH_dom_sf"/>
</dbReference>
<dbReference type="InterPro" id="IPR015848">
    <property type="entry name" value="PNPase_PH_RNA-bd_bac/org-type"/>
</dbReference>
<dbReference type="InterPro" id="IPR036456">
    <property type="entry name" value="PNPase_PH_RNA-bd_sf"/>
</dbReference>
<dbReference type="InterPro" id="IPR020568">
    <property type="entry name" value="Ribosomal_Su5_D2-typ_SF"/>
</dbReference>
<dbReference type="InterPro" id="IPR003029">
    <property type="entry name" value="S1_domain"/>
</dbReference>
<dbReference type="NCBIfam" id="TIGR03591">
    <property type="entry name" value="polynuc_phos"/>
    <property type="match status" value="1"/>
</dbReference>
<dbReference type="NCBIfam" id="NF008805">
    <property type="entry name" value="PRK11824.1"/>
    <property type="match status" value="1"/>
</dbReference>
<dbReference type="PANTHER" id="PTHR11252">
    <property type="entry name" value="POLYRIBONUCLEOTIDE NUCLEOTIDYLTRANSFERASE"/>
    <property type="match status" value="1"/>
</dbReference>
<dbReference type="PANTHER" id="PTHR11252:SF0">
    <property type="entry name" value="POLYRIBONUCLEOTIDE NUCLEOTIDYLTRANSFERASE 1, MITOCHONDRIAL"/>
    <property type="match status" value="1"/>
</dbReference>
<dbReference type="Pfam" id="PF00013">
    <property type="entry name" value="KH_1"/>
    <property type="match status" value="1"/>
</dbReference>
<dbReference type="Pfam" id="PF03726">
    <property type="entry name" value="PNPase"/>
    <property type="match status" value="1"/>
</dbReference>
<dbReference type="Pfam" id="PF01138">
    <property type="entry name" value="RNase_PH"/>
    <property type="match status" value="2"/>
</dbReference>
<dbReference type="Pfam" id="PF03725">
    <property type="entry name" value="RNase_PH_C"/>
    <property type="match status" value="2"/>
</dbReference>
<dbReference type="Pfam" id="PF00575">
    <property type="entry name" value="S1"/>
    <property type="match status" value="1"/>
</dbReference>
<dbReference type="PIRSF" id="PIRSF005499">
    <property type="entry name" value="PNPase"/>
    <property type="match status" value="1"/>
</dbReference>
<dbReference type="SMART" id="SM00322">
    <property type="entry name" value="KH"/>
    <property type="match status" value="1"/>
</dbReference>
<dbReference type="SMART" id="SM00316">
    <property type="entry name" value="S1"/>
    <property type="match status" value="1"/>
</dbReference>
<dbReference type="SUPFAM" id="SSF54791">
    <property type="entry name" value="Eukaryotic type KH-domain (KH-domain type I)"/>
    <property type="match status" value="1"/>
</dbReference>
<dbReference type="SUPFAM" id="SSF50249">
    <property type="entry name" value="Nucleic acid-binding proteins"/>
    <property type="match status" value="1"/>
</dbReference>
<dbReference type="SUPFAM" id="SSF46915">
    <property type="entry name" value="Polynucleotide phosphorylase/guanosine pentaphosphate synthase (PNPase/GPSI), domain 3"/>
    <property type="match status" value="1"/>
</dbReference>
<dbReference type="SUPFAM" id="SSF55666">
    <property type="entry name" value="Ribonuclease PH domain 2-like"/>
    <property type="match status" value="2"/>
</dbReference>
<dbReference type="SUPFAM" id="SSF54211">
    <property type="entry name" value="Ribosomal protein S5 domain 2-like"/>
    <property type="match status" value="2"/>
</dbReference>
<dbReference type="PROSITE" id="PS50084">
    <property type="entry name" value="KH_TYPE_1"/>
    <property type="match status" value="1"/>
</dbReference>
<dbReference type="PROSITE" id="PS50126">
    <property type="entry name" value="S1"/>
    <property type="match status" value="1"/>
</dbReference>
<proteinExistence type="inferred from homology"/>
<protein>
    <recommendedName>
        <fullName evidence="1">Polyribonucleotide nucleotidyltransferase</fullName>
        <ecNumber evidence="1">2.7.7.8</ecNumber>
    </recommendedName>
    <alternativeName>
        <fullName evidence="1">Polynucleotide phosphorylase</fullName>
        <shortName evidence="1">PNPase</shortName>
    </alternativeName>
</protein>
<keyword id="KW-0963">Cytoplasm</keyword>
<keyword id="KW-0460">Magnesium</keyword>
<keyword id="KW-0479">Metal-binding</keyword>
<keyword id="KW-0548">Nucleotidyltransferase</keyword>
<keyword id="KW-0694">RNA-binding</keyword>
<keyword id="KW-0808">Transferase</keyword>
<gene>
    <name evidence="1" type="primary">pnp</name>
    <name type="ordered locus">BURPS668_1285</name>
</gene>
<sequence length="713" mass="76990">MSLFNKIVKEFQWGQHKVRLETGEIARQASGAVIVDIEDTVVLATVVGAKSAKPGQDFFPLTVDYIEKTYSAGKIPGGFFRREGRPSEHETLTSRLIDRPLRPLFPEGFYNEVQVVIHVLSVNPEIPADIPALIGASAALAVSGLPFNGPVGAARVAYVNNEYVLNPTREQIKASRLDLVVAGTERAVLMVESEADQLPEDVMLGAVVFGHEQMQTAIDAIHELVREGGKPEWDWQPAPKDEALNARVTELAQPELLAAYQIRDKQARSTKLKEVYAATSAKLEEEAVAAGTVAADKATVGNILFDLEAKIVRGQILNGEPRIDGRDTRTVRPIEIRTGVLPRTHGSALFTRGETQALVVATLGTKGDEQIIDALEGEYRERFMLHYNMPPFATGETGRVGSPKRREIGHGRLAKRALVACLPSADEFGYSIRVVSEITESNGSSSMASVCGGCLALMDAGVPMKAHVAGIAMGLILEGNKFAVLTDILGDEDHLGDMDFKVAGTADGVTALQMDIKIQGITKEIMQVALAQAKEGRMHILGKMKDAVAGANTQLSEFAPRMITIKINPEKIRDVIGKGGSVIRALTEETGTTIDISDDGVVTIASTNSEGMAEAKKRIENITAEIEVGHVYEGTVLKLLDFGAIVNLLPGKDGLLHISEIVNERVKDINDYLKEGQQVKVKVIQTDEKGRVRLSAKALLNEAAAQADTPPQQ</sequence>
<reference key="1">
    <citation type="journal article" date="2010" name="Genome Biol. Evol.">
        <title>Continuing evolution of Burkholderia mallei through genome reduction and large-scale rearrangements.</title>
        <authorList>
            <person name="Losada L."/>
            <person name="Ronning C.M."/>
            <person name="DeShazer D."/>
            <person name="Woods D."/>
            <person name="Fedorova N."/>
            <person name="Kim H.S."/>
            <person name="Shabalina S.A."/>
            <person name="Pearson T.R."/>
            <person name="Brinkac L."/>
            <person name="Tan P."/>
            <person name="Nandi T."/>
            <person name="Crabtree J."/>
            <person name="Badger J."/>
            <person name="Beckstrom-Sternberg S."/>
            <person name="Saqib M."/>
            <person name="Schutzer S.E."/>
            <person name="Keim P."/>
            <person name="Nierman W.C."/>
        </authorList>
    </citation>
    <scope>NUCLEOTIDE SEQUENCE [LARGE SCALE GENOMIC DNA]</scope>
    <source>
        <strain>668</strain>
    </source>
</reference>
<comment type="function">
    <text evidence="1">Involved in mRNA degradation. Catalyzes the phosphorolysis of single-stranded polyribonucleotides processively in the 3'- to 5'-direction.</text>
</comment>
<comment type="catalytic activity">
    <reaction evidence="1">
        <text>RNA(n+1) + phosphate = RNA(n) + a ribonucleoside 5'-diphosphate</text>
        <dbReference type="Rhea" id="RHEA:22096"/>
        <dbReference type="Rhea" id="RHEA-COMP:14527"/>
        <dbReference type="Rhea" id="RHEA-COMP:17342"/>
        <dbReference type="ChEBI" id="CHEBI:43474"/>
        <dbReference type="ChEBI" id="CHEBI:57930"/>
        <dbReference type="ChEBI" id="CHEBI:140395"/>
        <dbReference type="EC" id="2.7.7.8"/>
    </reaction>
</comment>
<comment type="cofactor">
    <cofactor evidence="1">
        <name>Mg(2+)</name>
        <dbReference type="ChEBI" id="CHEBI:18420"/>
    </cofactor>
</comment>
<comment type="subcellular location">
    <subcellularLocation>
        <location evidence="1">Cytoplasm</location>
    </subcellularLocation>
</comment>
<comment type="similarity">
    <text evidence="1">Belongs to the polyribonucleotide nucleotidyltransferase family.</text>
</comment>
<feature type="chain" id="PRO_0000329561" description="Polyribonucleotide nucleotidyltransferase">
    <location>
        <begin position="1"/>
        <end position="713"/>
    </location>
</feature>
<feature type="domain" description="KH" evidence="1">
    <location>
        <begin position="560"/>
        <end position="619"/>
    </location>
</feature>
<feature type="domain" description="S1 motif" evidence="1">
    <location>
        <begin position="629"/>
        <end position="697"/>
    </location>
</feature>
<feature type="binding site" evidence="1">
    <location>
        <position position="493"/>
    </location>
    <ligand>
        <name>Mg(2+)</name>
        <dbReference type="ChEBI" id="CHEBI:18420"/>
    </ligand>
</feature>
<feature type="binding site" evidence="1">
    <location>
        <position position="499"/>
    </location>
    <ligand>
        <name>Mg(2+)</name>
        <dbReference type="ChEBI" id="CHEBI:18420"/>
    </ligand>
</feature>
<evidence type="ECO:0000255" key="1">
    <source>
        <dbReference type="HAMAP-Rule" id="MF_01595"/>
    </source>
</evidence>
<accession>A3N7L3</accession>